<name>AHPD_STRGG</name>
<gene>
    <name evidence="2" type="primary">ahpD</name>
    <name type="ordered locus">SGR_2502</name>
</gene>
<keyword id="KW-0049">Antioxidant</keyword>
<keyword id="KW-1015">Disulfide bond</keyword>
<keyword id="KW-0560">Oxidoreductase</keyword>
<keyword id="KW-0575">Peroxidase</keyword>
<keyword id="KW-0676">Redox-active center</keyword>
<proteinExistence type="inferred from homology"/>
<reference key="1">
    <citation type="journal article" date="2008" name="J. Bacteriol.">
        <title>Genome sequence of the streptomycin-producing microorganism Streptomyces griseus IFO 13350.</title>
        <authorList>
            <person name="Ohnishi Y."/>
            <person name="Ishikawa J."/>
            <person name="Hara H."/>
            <person name="Suzuki H."/>
            <person name="Ikenoya M."/>
            <person name="Ikeda H."/>
            <person name="Yamashita A."/>
            <person name="Hattori M."/>
            <person name="Horinouchi S."/>
        </authorList>
    </citation>
    <scope>NUCLEOTIDE SEQUENCE [LARGE SCALE GENOMIC DNA]</scope>
    <source>
        <strain>JCM 4626 / CBS 651.72 / NBRC 13350 / KCC S-0626 / ISP 5235</strain>
    </source>
</reference>
<organism>
    <name type="scientific">Streptomyces griseus subsp. griseus (strain JCM 4626 / CBS 651.72 / NBRC 13350 / KCC S-0626 / ISP 5235)</name>
    <dbReference type="NCBI Taxonomy" id="455632"/>
    <lineage>
        <taxon>Bacteria</taxon>
        <taxon>Bacillati</taxon>
        <taxon>Actinomycetota</taxon>
        <taxon>Actinomycetes</taxon>
        <taxon>Kitasatosporales</taxon>
        <taxon>Streptomycetaceae</taxon>
        <taxon>Streptomyces</taxon>
    </lineage>
</organism>
<accession>B1W2G7</accession>
<sequence>MALDELKSAIPDFAKDLKLNLGSVIGNSDLPQQQLWGTVLACAIASRSPKVLRELEPEAKANLSAEAYTAAKSAAAIMAMNNVFYRTRHLLSDPEYGTLRAGLRMNVIGNPGVEKVDFELWSLAVSAINGCGQCLDSHEQVLRKAGVDRETIQEAVKVASVIQAVGVTLDAEAVLAE</sequence>
<feature type="chain" id="PRO_0000359510" description="Alkyl hydroperoxide reductase AhpD">
    <location>
        <begin position="1"/>
        <end position="177"/>
    </location>
</feature>
<feature type="active site" description="Proton donor" evidence="2">
    <location>
        <position position="131"/>
    </location>
</feature>
<feature type="active site" description="Cysteine sulfenic acid (-SOH) intermediate" evidence="2">
    <location>
        <position position="134"/>
    </location>
</feature>
<feature type="disulfide bond" evidence="1">
    <location>
        <begin position="131"/>
        <end position="134"/>
    </location>
</feature>
<feature type="disulfide bond" description="Interchain (with AhpC); in linked form" evidence="2">
    <location>
        <position position="134"/>
    </location>
</feature>
<protein>
    <recommendedName>
        <fullName evidence="2">Alkyl hydroperoxide reductase AhpD</fullName>
        <ecNumber evidence="2">1.11.1.28</ecNumber>
    </recommendedName>
    <alternativeName>
        <fullName evidence="2">Alkylhydroperoxidase AhpD</fullName>
    </alternativeName>
</protein>
<comment type="function">
    <text evidence="2">Antioxidant protein with alkyl hydroperoxidase activity. Required for the reduction of the AhpC active site cysteine residues and for the regeneration of the AhpC enzyme activity.</text>
</comment>
<comment type="catalytic activity">
    <reaction evidence="2">
        <text>N(6)-[(R)-dihydrolipoyl]-L-lysyl-[lipoyl-carrier protein] + a hydroperoxide = N(6)-[(R)-lipoyl]-L-lysyl-[lipoyl-carrier protein] + an alcohol + H2O</text>
        <dbReference type="Rhea" id="RHEA:62636"/>
        <dbReference type="Rhea" id="RHEA-COMP:10502"/>
        <dbReference type="Rhea" id="RHEA-COMP:16355"/>
        <dbReference type="ChEBI" id="CHEBI:15377"/>
        <dbReference type="ChEBI" id="CHEBI:30879"/>
        <dbReference type="ChEBI" id="CHEBI:35924"/>
        <dbReference type="ChEBI" id="CHEBI:83099"/>
        <dbReference type="ChEBI" id="CHEBI:83100"/>
        <dbReference type="EC" id="1.11.1.28"/>
    </reaction>
</comment>
<comment type="subunit">
    <text evidence="2">Homotrimer.</text>
</comment>
<comment type="similarity">
    <text evidence="2">Belongs to the AhpD family.</text>
</comment>
<dbReference type="EC" id="1.11.1.28" evidence="2"/>
<dbReference type="EMBL" id="AP009493">
    <property type="protein sequence ID" value="BAG19331.1"/>
    <property type="molecule type" value="Genomic_DNA"/>
</dbReference>
<dbReference type="RefSeq" id="WP_003966620.1">
    <property type="nucleotide sequence ID" value="NC_010572.1"/>
</dbReference>
<dbReference type="SMR" id="B1W2G7"/>
<dbReference type="KEGG" id="sgr:SGR_2502"/>
<dbReference type="eggNOG" id="COG2128">
    <property type="taxonomic scope" value="Bacteria"/>
</dbReference>
<dbReference type="HOGENOM" id="CLU_105328_0_0_11"/>
<dbReference type="Proteomes" id="UP000001685">
    <property type="component" value="Chromosome"/>
</dbReference>
<dbReference type="GO" id="GO:0008785">
    <property type="term" value="F:alkyl hydroperoxide reductase activity"/>
    <property type="evidence" value="ECO:0007669"/>
    <property type="project" value="UniProtKB-UniRule"/>
</dbReference>
<dbReference type="GO" id="GO:0015036">
    <property type="term" value="F:disulfide oxidoreductase activity"/>
    <property type="evidence" value="ECO:0007669"/>
    <property type="project" value="TreeGrafter"/>
</dbReference>
<dbReference type="GO" id="GO:0032843">
    <property type="term" value="F:hydroperoxide reductase activity"/>
    <property type="evidence" value="ECO:0007669"/>
    <property type="project" value="InterPro"/>
</dbReference>
<dbReference type="GO" id="GO:0051920">
    <property type="term" value="F:peroxiredoxin activity"/>
    <property type="evidence" value="ECO:0007669"/>
    <property type="project" value="InterPro"/>
</dbReference>
<dbReference type="GO" id="GO:0045454">
    <property type="term" value="P:cell redox homeostasis"/>
    <property type="evidence" value="ECO:0007669"/>
    <property type="project" value="TreeGrafter"/>
</dbReference>
<dbReference type="GO" id="GO:0006979">
    <property type="term" value="P:response to oxidative stress"/>
    <property type="evidence" value="ECO:0007669"/>
    <property type="project" value="InterPro"/>
</dbReference>
<dbReference type="Gene3D" id="1.20.1290.10">
    <property type="entry name" value="AhpD-like"/>
    <property type="match status" value="1"/>
</dbReference>
<dbReference type="HAMAP" id="MF_01676">
    <property type="entry name" value="AhpD"/>
    <property type="match status" value="1"/>
</dbReference>
<dbReference type="InterPro" id="IPR004674">
    <property type="entry name" value="AhpD"/>
</dbReference>
<dbReference type="InterPro" id="IPR029032">
    <property type="entry name" value="AhpD-like"/>
</dbReference>
<dbReference type="InterPro" id="IPR004675">
    <property type="entry name" value="AhpD_core"/>
</dbReference>
<dbReference type="InterPro" id="IPR003779">
    <property type="entry name" value="CMD-like"/>
</dbReference>
<dbReference type="NCBIfam" id="TIGR00777">
    <property type="entry name" value="ahpD"/>
    <property type="match status" value="1"/>
</dbReference>
<dbReference type="NCBIfam" id="TIGR00778">
    <property type="entry name" value="ahpD_dom"/>
    <property type="match status" value="1"/>
</dbReference>
<dbReference type="PANTHER" id="PTHR33930">
    <property type="entry name" value="ALKYL HYDROPEROXIDE REDUCTASE AHPD"/>
    <property type="match status" value="1"/>
</dbReference>
<dbReference type="PANTHER" id="PTHR33930:SF7">
    <property type="entry name" value="ALKYL HYDROPEROXIDE REDUCTASE AHPD"/>
    <property type="match status" value="1"/>
</dbReference>
<dbReference type="Pfam" id="PF02627">
    <property type="entry name" value="CMD"/>
    <property type="match status" value="1"/>
</dbReference>
<dbReference type="SUPFAM" id="SSF69118">
    <property type="entry name" value="AhpD-like"/>
    <property type="match status" value="1"/>
</dbReference>
<evidence type="ECO:0000250" key="1"/>
<evidence type="ECO:0000255" key="2">
    <source>
        <dbReference type="HAMAP-Rule" id="MF_01676"/>
    </source>
</evidence>